<gene>
    <name evidence="10" type="primary">CYP51</name>
    <name type="ORF">Tc00.1047053506297.260</name>
    <name type="ORF">Tc00.1047053510101.50</name>
</gene>
<reference evidence="8 9" key="1">
    <citation type="journal article" date="2003" name="Mol. Biochem. Parasitol.">
        <title>Cloning and analysis of Trypanosoma cruzi lanosterol 14alpha-demethylase.</title>
        <authorList>
            <person name="Buckner F.S."/>
            <person name="Joubert B.M."/>
            <person name="Boyle S.M."/>
            <person name="Eastman R.T."/>
            <person name="Verlinde C.L.M.J."/>
            <person name="Matsuda S.P.T."/>
        </authorList>
    </citation>
    <scope>NUCLEOTIDE SEQUENCE [GENOMIC DNA] (ALLELES 1 AND 2)</scope>
    <scope>DEVELOPMENTAL STAGE</scope>
    <source>
        <strain evidence="9">Tulahuen</strain>
    </source>
</reference>
<reference evidence="8 10" key="2">
    <citation type="journal article" date="2006" name="J. Biol. Chem.">
        <title>CYP51 from Trypanosoma cruzi: a phyla-specific residue in the B' helix defines substrate preferences of sterol 14alpha-demethylase.</title>
        <authorList>
            <person name="Lepesheva G.I."/>
            <person name="Zaitseva N.G."/>
            <person name="Nes W.D."/>
            <person name="Zhou W."/>
            <person name="Arase M."/>
            <person name="Liu J."/>
            <person name="Hill G.C."/>
            <person name="Waterman M.R."/>
        </authorList>
    </citation>
    <scope>NUCLEOTIDE SEQUENCE [GENOMIC DNA] (ALLELE 1)</scope>
    <scope>FUNCTION</scope>
    <scope>CATALYTIC ACTIVITY</scope>
    <scope>MUTAGENESIS OF ILE-105</scope>
</reference>
<reference evidence="11" key="3">
    <citation type="journal article" date="2005" name="Science">
        <title>The genome sequence of Trypanosoma cruzi, etiologic agent of Chagas disease.</title>
        <authorList>
            <person name="El-Sayed N.M.A."/>
            <person name="Myler P.J."/>
            <person name="Bartholomeu D.C."/>
            <person name="Nilsson D."/>
            <person name="Aggarwal G."/>
            <person name="Tran A.-N."/>
            <person name="Ghedin E."/>
            <person name="Worthey E.A."/>
            <person name="Delcher A.L."/>
            <person name="Blandin G."/>
            <person name="Westenberger S.J."/>
            <person name="Caler E."/>
            <person name="Cerqueira G.C."/>
            <person name="Branche C."/>
            <person name="Haas B."/>
            <person name="Anupama A."/>
            <person name="Arner E."/>
            <person name="Aslund L."/>
            <person name="Attipoe P."/>
            <person name="Bontempi E."/>
            <person name="Bringaud F."/>
            <person name="Burton P."/>
            <person name="Cadag E."/>
            <person name="Campbell D.A."/>
            <person name="Carrington M."/>
            <person name="Crabtree J."/>
            <person name="Darban H."/>
            <person name="da Silveira J.F."/>
            <person name="de Jong P."/>
            <person name="Edwards K."/>
            <person name="Englund P.T."/>
            <person name="Fazelina G."/>
            <person name="Feldblyum T."/>
            <person name="Ferella M."/>
            <person name="Frasch A.C."/>
            <person name="Gull K."/>
            <person name="Horn D."/>
            <person name="Hou L."/>
            <person name="Huang Y."/>
            <person name="Kindlund E."/>
            <person name="Klingbeil M."/>
            <person name="Kluge S."/>
            <person name="Koo H."/>
            <person name="Lacerda D."/>
            <person name="Levin M.J."/>
            <person name="Lorenzi H."/>
            <person name="Louie T."/>
            <person name="Machado C.R."/>
            <person name="McCulloch R."/>
            <person name="McKenna A."/>
            <person name="Mizuno Y."/>
            <person name="Mottram J.C."/>
            <person name="Nelson S."/>
            <person name="Ochaya S."/>
            <person name="Osoegawa K."/>
            <person name="Pai G."/>
            <person name="Parsons M."/>
            <person name="Pentony M."/>
            <person name="Pettersson U."/>
            <person name="Pop M."/>
            <person name="Ramirez J.L."/>
            <person name="Rinta J."/>
            <person name="Robertson L."/>
            <person name="Salzberg S.L."/>
            <person name="Sanchez D.O."/>
            <person name="Seyler A."/>
            <person name="Sharma R."/>
            <person name="Shetty J."/>
            <person name="Simpson A.J."/>
            <person name="Sisk E."/>
            <person name="Tammi M.T."/>
            <person name="Tarleton R."/>
            <person name="Teixeira S."/>
            <person name="Van Aken S."/>
            <person name="Vogt C."/>
            <person name="Ward P.N."/>
            <person name="Wickstead B."/>
            <person name="Wortman J."/>
            <person name="White O."/>
            <person name="Fraser C.M."/>
            <person name="Stuart K.D."/>
            <person name="Andersson B."/>
        </authorList>
    </citation>
    <scope>NUCLEOTIDE SEQUENCE [LARGE SCALE GENOMIC DNA] (ALLELES 1 AND 2)</scope>
    <source>
        <strain evidence="11">CL Brener</strain>
    </source>
</reference>
<comment type="function">
    <text evidence="1 5">Catalyzes C14-demethylation of lanosterol which is critical for ergosterol biosynthesis. It transforms lanosterol into 4,4'-dimethyl cholesta-8,14,24-triene-3-beta-ol (By similarity). Favors C4 dimethylated substrates, the substrate preference order is 24-methylenedihydrolanosterol &gt; 24,25-dihydrolanosterol &gt; lanosterol &gt; obtusifoliol &gt; norlanosterol.</text>
</comment>
<comment type="catalytic activity">
    <reaction evidence="5">
        <text>a 14alpha-methyl steroid + 3 reduced [NADPH--hemoprotein reductase] + 3 O2 = a Delta(14) steroid + formate + 3 oxidized [NADPH--hemoprotein reductase] + 4 H2O + 4 H(+)</text>
        <dbReference type="Rhea" id="RHEA:54028"/>
        <dbReference type="Rhea" id="RHEA-COMP:11964"/>
        <dbReference type="Rhea" id="RHEA-COMP:11965"/>
        <dbReference type="ChEBI" id="CHEBI:15377"/>
        <dbReference type="ChEBI" id="CHEBI:15378"/>
        <dbReference type="ChEBI" id="CHEBI:15379"/>
        <dbReference type="ChEBI" id="CHEBI:15740"/>
        <dbReference type="ChEBI" id="CHEBI:57618"/>
        <dbReference type="ChEBI" id="CHEBI:58210"/>
        <dbReference type="ChEBI" id="CHEBI:138029"/>
        <dbReference type="ChEBI" id="CHEBI:138031"/>
        <dbReference type="EC" id="1.14.14.154"/>
    </reaction>
</comment>
<comment type="cofactor">
    <cofactor evidence="1">
        <name>heme</name>
        <dbReference type="ChEBI" id="CHEBI:30413"/>
    </cofactor>
</comment>
<comment type="pathway">
    <text evidence="1">Steroid biosynthesis; zymosterol biosynthesis; zymosterol from lanosterol: step 1/6.</text>
</comment>
<comment type="subcellular location">
    <subcellularLocation>
        <location evidence="8">Membrane</location>
        <topology evidence="8">Single-pass membrane protein</topology>
    </subcellularLocation>
</comment>
<comment type="developmental stage">
    <text evidence="3">Expressed in both the insect and mammalian life-cycle stages.</text>
</comment>
<comment type="similarity">
    <text evidence="2">Belongs to the cytochrome P450 family.</text>
</comment>
<proteinExistence type="evidence at protein level"/>
<organism>
    <name type="scientific">Trypanosoma cruzi (strain CL Brener)</name>
    <dbReference type="NCBI Taxonomy" id="353153"/>
    <lineage>
        <taxon>Eukaryota</taxon>
        <taxon>Discoba</taxon>
        <taxon>Euglenozoa</taxon>
        <taxon>Kinetoplastea</taxon>
        <taxon>Metakinetoplastina</taxon>
        <taxon>Trypanosomatida</taxon>
        <taxon>Trypanosomatidae</taxon>
        <taxon>Trypanosoma</taxon>
        <taxon>Schizotrypanum</taxon>
    </lineage>
</organism>
<feature type="chain" id="PRO_0000389527" description="Sterol 14-alpha demethylase">
    <location>
        <begin position="1"/>
        <end position="481"/>
    </location>
</feature>
<feature type="transmembrane region" description="Helical" evidence="2">
    <location>
        <begin position="1"/>
        <end position="21"/>
    </location>
</feature>
<feature type="binding site" description="axial binding residue" evidence="1">
    <location>
        <position position="422"/>
    </location>
    <ligand>
        <name>heme</name>
        <dbReference type="ChEBI" id="CHEBI:30413"/>
    </ligand>
    <ligandPart>
        <name>Fe</name>
        <dbReference type="ChEBI" id="CHEBI:18248"/>
    </ligandPart>
</feature>
<feature type="sequence variant" description="In allele 2." evidence="3 4">
    <original>D</original>
    <variation>E</variation>
    <location>
        <position position="62"/>
    </location>
</feature>
<feature type="sequence variant" description="In allele 2." evidence="3 4">
    <original>A</original>
    <variation>S</variation>
    <location>
        <position position="117"/>
    </location>
</feature>
<feature type="sequence variant" description="In allele 2." evidence="3 4">
    <original>E</original>
    <variation>K</variation>
    <location>
        <position position="160"/>
    </location>
</feature>
<feature type="mutagenesis site" description="Increases activity on norlanosterol and obtusifoliol." evidence="5">
    <original>I</original>
    <variation>F</variation>
    <location>
        <position position="105"/>
    </location>
</feature>
<feature type="sequence conflict" description="In Ref. 2; AAW47718 and 3; EAN98359." evidence="8" ref="2 3">
    <original>A</original>
    <variation>G</variation>
    <location>
        <position position="9"/>
    </location>
</feature>
<feature type="strand" evidence="12">
    <location>
        <begin position="29"/>
        <end position="31"/>
    </location>
</feature>
<feature type="strand" evidence="13">
    <location>
        <begin position="34"/>
        <end position="36"/>
    </location>
</feature>
<feature type="turn" evidence="15">
    <location>
        <begin position="40"/>
        <end position="42"/>
    </location>
</feature>
<feature type="helix" evidence="15">
    <location>
        <begin position="45"/>
        <end position="50"/>
    </location>
</feature>
<feature type="helix" evidence="15">
    <location>
        <begin position="52"/>
        <end position="62"/>
    </location>
</feature>
<feature type="strand" evidence="15">
    <location>
        <begin position="66"/>
        <end position="72"/>
    </location>
</feature>
<feature type="strand" evidence="15">
    <location>
        <begin position="75"/>
        <end position="80"/>
    </location>
</feature>
<feature type="helix" evidence="15">
    <location>
        <begin position="83"/>
        <end position="85"/>
    </location>
</feature>
<feature type="helix" evidence="15">
    <location>
        <begin position="86"/>
        <end position="90"/>
    </location>
</feature>
<feature type="turn" evidence="15">
    <location>
        <begin position="94"/>
        <end position="96"/>
    </location>
</feature>
<feature type="helix" evidence="15">
    <location>
        <begin position="99"/>
        <end position="102"/>
    </location>
</feature>
<feature type="helix" evidence="15">
    <location>
        <begin position="104"/>
        <end position="106"/>
    </location>
</feature>
<feature type="helix" evidence="15">
    <location>
        <begin position="107"/>
        <end position="110"/>
    </location>
</feature>
<feature type="turn" evidence="13">
    <location>
        <begin position="112"/>
        <end position="114"/>
    </location>
</feature>
<feature type="helix" evidence="15">
    <location>
        <begin position="115"/>
        <end position="117"/>
    </location>
</feature>
<feature type="helix" evidence="15">
    <location>
        <begin position="120"/>
        <end position="132"/>
    </location>
</feature>
<feature type="helix" evidence="15">
    <location>
        <begin position="136"/>
        <end position="138"/>
    </location>
</feature>
<feature type="helix" evidence="16">
    <location>
        <begin position="139"/>
        <end position="141"/>
    </location>
</feature>
<feature type="helix" evidence="15">
    <location>
        <begin position="142"/>
        <end position="157"/>
    </location>
</feature>
<feature type="strand" evidence="15">
    <location>
        <begin position="160"/>
        <end position="166"/>
    </location>
</feature>
<feature type="helix" evidence="15">
    <location>
        <begin position="167"/>
        <end position="183"/>
    </location>
</feature>
<feature type="helix" evidence="15">
    <location>
        <begin position="186"/>
        <end position="191"/>
    </location>
</feature>
<feature type="helix" evidence="15">
    <location>
        <begin position="194"/>
        <end position="206"/>
    </location>
</feature>
<feature type="helix" evidence="15">
    <location>
        <begin position="210"/>
        <end position="213"/>
    </location>
</feature>
<feature type="helix" evidence="15">
    <location>
        <begin position="216"/>
        <end position="220"/>
    </location>
</feature>
<feature type="helix" evidence="15">
    <location>
        <begin position="229"/>
        <end position="250"/>
    </location>
</feature>
<feature type="turn" evidence="14">
    <location>
        <begin position="252"/>
        <end position="254"/>
    </location>
</feature>
<feature type="helix" evidence="15">
    <location>
        <begin position="261"/>
        <end position="265"/>
    </location>
</feature>
<feature type="strand" evidence="12">
    <location>
        <begin position="271"/>
        <end position="273"/>
    </location>
</feature>
<feature type="helix" evidence="15">
    <location>
        <begin position="278"/>
        <end position="308"/>
    </location>
</feature>
<feature type="helix" evidence="15">
    <location>
        <begin position="310"/>
        <end position="312"/>
    </location>
</feature>
<feature type="helix" evidence="15">
    <location>
        <begin position="313"/>
        <end position="323"/>
    </location>
</feature>
<feature type="strand" evidence="17">
    <location>
        <begin position="324"/>
        <end position="326"/>
    </location>
</feature>
<feature type="helix" evidence="15">
    <location>
        <begin position="332"/>
        <end position="337"/>
    </location>
</feature>
<feature type="helix" evidence="15">
    <location>
        <begin position="340"/>
        <end position="352"/>
    </location>
</feature>
<feature type="strand" evidence="15">
    <location>
        <begin position="359"/>
        <end position="365"/>
    </location>
</feature>
<feature type="strand" evidence="15">
    <location>
        <begin position="367"/>
        <end position="369"/>
    </location>
</feature>
<feature type="strand" evidence="15">
    <location>
        <begin position="372"/>
        <end position="374"/>
    </location>
</feature>
<feature type="strand" evidence="15">
    <location>
        <begin position="379"/>
        <end position="382"/>
    </location>
</feature>
<feature type="helix" evidence="15">
    <location>
        <begin position="384"/>
        <end position="387"/>
    </location>
</feature>
<feature type="turn" evidence="15">
    <location>
        <begin position="391"/>
        <end position="393"/>
    </location>
</feature>
<feature type="strand" evidence="15">
    <location>
        <begin position="394"/>
        <end position="396"/>
    </location>
</feature>
<feature type="helix" evidence="15">
    <location>
        <begin position="418"/>
        <end position="420"/>
    </location>
</feature>
<feature type="helix" evidence="15">
    <location>
        <begin position="425"/>
        <end position="442"/>
    </location>
</feature>
<feature type="strand" evidence="15">
    <location>
        <begin position="443"/>
        <end position="451"/>
    </location>
</feature>
<feature type="strand" evidence="15">
    <location>
        <begin position="459"/>
        <end position="461"/>
    </location>
</feature>
<feature type="helix" evidence="15">
    <location>
        <begin position="466"/>
        <end position="468"/>
    </location>
</feature>
<feature type="strand" evidence="15">
    <location>
        <begin position="470"/>
        <end position="475"/>
    </location>
</feature>
<accession>Q7Z1V1</accession>
<accession>Q5I4E1</accession>
<accession>Q7Z1V0</accession>
<protein>
    <recommendedName>
        <fullName evidence="7 10">Sterol 14-alpha demethylase</fullName>
        <shortName evidence="6">Tc14DM</shortName>
        <ecNumber evidence="5">1.14.14.154</ecNumber>
    </recommendedName>
    <alternativeName>
        <fullName evidence="1">Cytochrome P450 51</fullName>
    </alternativeName>
    <alternativeName>
        <fullName evidence="6 9">Lanosterol 14-alpha demethylase</fullName>
    </alternativeName>
</protein>
<sequence>MFIEAIVLALTALILYSVYSVKSFNTTRPTDPPVYPVTVPFLGHIVQFGKNPLEFMQRCKRDLKSGVFTISIGGQRVTIVGDPHEHSRFFSPRNEILSPREVYTIMTPVFGEGVAYAAPYPRMREQLNFLAEELTIAKFQNFVPAIQHEVRKFMAENWKEDEGVINLLEDCGAMIINTACQCLFGEDLRKRLNARHFAQLLSKMESSLIPAAVFMPWLLRLPLPQSARCREARAELQKILGEIIVAREKEEASKDNNTSDLLGGLLKAVYRDGTRMSLHEVCGMIVAAMFAGQHTSTITTSWSMLHLMHPKNKKWLDKLHKEIDEFPAQLNYDNVMDEMPFAERCVRESIRRDPPLLMVMRMVKAEVKVGSYVVPKGDIIACSPLLSHHDEEAFPNPRLWDPERDEKVDGAFIGFGAGVHKCIGQKFALLQVKTILATAFREYDFQLLRDEVPDPDYHTMVVGPTLNQCLVKYTRKKKLPS</sequence>
<evidence type="ECO:0000250" key="1">
    <source>
        <dbReference type="UniProtKB" id="P0A512"/>
    </source>
</evidence>
<evidence type="ECO:0000255" key="2"/>
<evidence type="ECO:0000269" key="3">
    <source>
    </source>
</evidence>
<evidence type="ECO:0000269" key="4">
    <source>
    </source>
</evidence>
<evidence type="ECO:0000269" key="5">
    <source>
    </source>
</evidence>
<evidence type="ECO:0000303" key="6">
    <source>
    </source>
</evidence>
<evidence type="ECO:0000303" key="7">
    <source>
    </source>
</evidence>
<evidence type="ECO:0000305" key="8"/>
<evidence type="ECO:0000312" key="9">
    <source>
        <dbReference type="EMBL" id="AAP33131.1"/>
    </source>
</evidence>
<evidence type="ECO:0000312" key="10">
    <source>
        <dbReference type="EMBL" id="AAW47718.1"/>
    </source>
</evidence>
<evidence type="ECO:0000312" key="11">
    <source>
        <dbReference type="EMBL" id="EAN98359.1"/>
    </source>
</evidence>
<evidence type="ECO:0007829" key="12">
    <source>
        <dbReference type="PDB" id="2WUZ"/>
    </source>
</evidence>
<evidence type="ECO:0007829" key="13">
    <source>
        <dbReference type="PDB" id="2WX2"/>
    </source>
</evidence>
<evidence type="ECO:0007829" key="14">
    <source>
        <dbReference type="PDB" id="3KSW"/>
    </source>
</evidence>
<evidence type="ECO:0007829" key="15">
    <source>
        <dbReference type="PDB" id="4C27"/>
    </source>
</evidence>
<evidence type="ECO:0007829" key="16">
    <source>
        <dbReference type="PDB" id="4CK8"/>
    </source>
</evidence>
<evidence type="ECO:0007829" key="17">
    <source>
        <dbReference type="PDB" id="4CK9"/>
    </source>
</evidence>
<keyword id="KW-0002">3D-structure</keyword>
<keyword id="KW-0349">Heme</keyword>
<keyword id="KW-0408">Iron</keyword>
<keyword id="KW-0444">Lipid biosynthesis</keyword>
<keyword id="KW-0443">Lipid metabolism</keyword>
<keyword id="KW-0472">Membrane</keyword>
<keyword id="KW-0479">Metal-binding</keyword>
<keyword id="KW-0503">Monooxygenase</keyword>
<keyword id="KW-0560">Oxidoreductase</keyword>
<keyword id="KW-1185">Reference proteome</keyword>
<keyword id="KW-0752">Steroid biosynthesis</keyword>
<keyword id="KW-0753">Steroid metabolism</keyword>
<keyword id="KW-0756">Sterol biosynthesis</keyword>
<keyword id="KW-1207">Sterol metabolism</keyword>
<keyword id="KW-0812">Transmembrane</keyword>
<keyword id="KW-1133">Transmembrane helix</keyword>
<dbReference type="EC" id="1.14.14.154" evidence="5"/>
<dbReference type="EMBL" id="AY283022">
    <property type="protein sequence ID" value="AAP33131.1"/>
    <property type="molecule type" value="Genomic_DNA"/>
</dbReference>
<dbReference type="EMBL" id="AY283023">
    <property type="protein sequence ID" value="AAP33132.1"/>
    <property type="molecule type" value="Genomic_DNA"/>
</dbReference>
<dbReference type="EMBL" id="AY856083">
    <property type="protein sequence ID" value="AAW47718.1"/>
    <property type="molecule type" value="Genomic_DNA"/>
</dbReference>
<dbReference type="EMBL" id="AAHK01000021">
    <property type="protein sequence ID" value="EAN99368.1"/>
    <property type="molecule type" value="Genomic_DNA"/>
</dbReference>
<dbReference type="EMBL" id="AAHK01000058">
    <property type="protein sequence ID" value="EAN98359.1"/>
    <property type="molecule type" value="Genomic_DNA"/>
</dbReference>
<dbReference type="RefSeq" id="XP_820210.1">
    <property type="nucleotide sequence ID" value="XM_815117.1"/>
</dbReference>
<dbReference type="RefSeq" id="XP_821219.1">
    <property type="nucleotide sequence ID" value="XM_816126.1"/>
</dbReference>
<dbReference type="PDB" id="2WUZ">
    <property type="method" value="X-ray"/>
    <property type="resolution" value="2.35 A"/>
    <property type="chains" value="A/B=22-481"/>
</dbReference>
<dbReference type="PDB" id="2WX2">
    <property type="method" value="X-ray"/>
    <property type="resolution" value="2.27 A"/>
    <property type="chains" value="A/B=22-481"/>
</dbReference>
<dbReference type="PDB" id="3K1O">
    <property type="method" value="X-ray"/>
    <property type="resolution" value="2.89 A"/>
    <property type="chains" value="A=32-481"/>
</dbReference>
<dbReference type="PDB" id="3KHM">
    <property type="method" value="X-ray"/>
    <property type="resolution" value="2.85 A"/>
    <property type="chains" value="A=32-481"/>
</dbReference>
<dbReference type="PDB" id="3KSW">
    <property type="method" value="X-ray"/>
    <property type="resolution" value="3.05 A"/>
    <property type="chains" value="A=32-481"/>
</dbReference>
<dbReference type="PDB" id="3ZG2">
    <property type="method" value="X-ray"/>
    <property type="resolution" value="2.80 A"/>
    <property type="chains" value="A=29-481"/>
</dbReference>
<dbReference type="PDB" id="3ZG3">
    <property type="method" value="X-ray"/>
    <property type="resolution" value="2.90 A"/>
    <property type="chains" value="A=29-481"/>
</dbReference>
<dbReference type="PDB" id="4BMM">
    <property type="method" value="X-ray"/>
    <property type="resolution" value="2.84 A"/>
    <property type="chains" value="A/B/C/D=32-481"/>
</dbReference>
<dbReference type="PDB" id="4BY0">
    <property type="method" value="X-ray"/>
    <property type="resolution" value="3.10 A"/>
    <property type="chains" value="A/B=32-481"/>
</dbReference>
<dbReference type="PDB" id="4C0C">
    <property type="method" value="X-ray"/>
    <property type="resolution" value="2.04 A"/>
    <property type="chains" value="A=32-481"/>
</dbReference>
<dbReference type="PDB" id="4C27">
    <property type="method" value="X-ray"/>
    <property type="resolution" value="1.95 A"/>
    <property type="chains" value="A/B=29-481"/>
</dbReference>
<dbReference type="PDB" id="4C28">
    <property type="method" value="X-ray"/>
    <property type="resolution" value="2.03 A"/>
    <property type="chains" value="A/B=29-481"/>
</dbReference>
<dbReference type="PDB" id="4CK8">
    <property type="method" value="X-ray"/>
    <property type="resolution" value="2.62 A"/>
    <property type="chains" value="A/B=32-481"/>
</dbReference>
<dbReference type="PDB" id="4CK9">
    <property type="method" value="X-ray"/>
    <property type="resolution" value="2.74 A"/>
    <property type="chains" value="A=32-481"/>
</dbReference>
<dbReference type="PDB" id="4CKA">
    <property type="method" value="X-ray"/>
    <property type="resolution" value="2.70 A"/>
    <property type="chains" value="A=32-481"/>
</dbReference>
<dbReference type="PDB" id="4COH">
    <property type="method" value="X-ray"/>
    <property type="resolution" value="2.08 A"/>
    <property type="chains" value="A/B=29-481"/>
</dbReference>
<dbReference type="PDB" id="4H6O">
    <property type="method" value="X-ray"/>
    <property type="resolution" value="2.80 A"/>
    <property type="chains" value="A=29-481"/>
</dbReference>
<dbReference type="PDB" id="4UQH">
    <property type="method" value="X-ray"/>
    <property type="resolution" value="2.43 A"/>
    <property type="chains" value="A=32-481"/>
</dbReference>
<dbReference type="PDB" id="4UVR">
    <property type="method" value="X-ray"/>
    <property type="resolution" value="2.48 A"/>
    <property type="chains" value="A=32-481"/>
</dbReference>
<dbReference type="PDB" id="5AJR">
    <property type="method" value="X-ray"/>
    <property type="resolution" value="2.75 A"/>
    <property type="chains" value="A=32-481"/>
</dbReference>
<dbReference type="PDB" id="6FMO">
    <property type="method" value="X-ray"/>
    <property type="resolution" value="3.18 A"/>
    <property type="chains" value="A/B/C/D=1-481"/>
</dbReference>
<dbReference type="PDBsum" id="2WUZ"/>
<dbReference type="PDBsum" id="2WX2"/>
<dbReference type="PDBsum" id="3K1O"/>
<dbReference type="PDBsum" id="3KHM"/>
<dbReference type="PDBsum" id="3KSW"/>
<dbReference type="PDBsum" id="3ZG2"/>
<dbReference type="PDBsum" id="3ZG3"/>
<dbReference type="PDBsum" id="4BMM"/>
<dbReference type="PDBsum" id="4BY0"/>
<dbReference type="PDBsum" id="4C0C"/>
<dbReference type="PDBsum" id="4C27"/>
<dbReference type="PDBsum" id="4C28"/>
<dbReference type="PDBsum" id="4CK8"/>
<dbReference type="PDBsum" id="4CK9"/>
<dbReference type="PDBsum" id="4CKA"/>
<dbReference type="PDBsum" id="4COH"/>
<dbReference type="PDBsum" id="4H6O"/>
<dbReference type="PDBsum" id="4UQH"/>
<dbReference type="PDBsum" id="4UVR"/>
<dbReference type="PDBsum" id="5AJR"/>
<dbReference type="PDBsum" id="6FMO"/>
<dbReference type="SMR" id="Q7Z1V1"/>
<dbReference type="FunCoup" id="Q7Z1V1">
    <property type="interactions" value="178"/>
</dbReference>
<dbReference type="STRING" id="353153.Q7Z1V1"/>
<dbReference type="BindingDB" id="Q7Z1V1"/>
<dbReference type="ChEMBL" id="CHEMBL1075110"/>
<dbReference type="DrugCentral" id="Q7Z1V1"/>
<dbReference type="PaxDb" id="353153-Q7Z1V1"/>
<dbReference type="EnsemblProtists" id="EAN98359">
    <property type="protein sequence ID" value="EAN98359"/>
    <property type="gene ID" value="Tc00.1047053506297.260"/>
</dbReference>
<dbReference type="EnsemblProtists" id="EAN99368">
    <property type="protein sequence ID" value="EAN99368"/>
    <property type="gene ID" value="Tc00.1047053510101.50"/>
</dbReference>
<dbReference type="GeneID" id="3552837"/>
<dbReference type="GeneID" id="3554116"/>
<dbReference type="KEGG" id="tcr:506297.260"/>
<dbReference type="KEGG" id="tcr:510101.50"/>
<dbReference type="eggNOG" id="KOG0684">
    <property type="taxonomic scope" value="Eukaryota"/>
</dbReference>
<dbReference type="InParanoid" id="Q7Z1V1"/>
<dbReference type="BRENDA" id="1.14.13.70">
    <property type="organism ID" value="6524"/>
</dbReference>
<dbReference type="BRENDA" id="1.14.14.154">
    <property type="organism ID" value="6524"/>
</dbReference>
<dbReference type="UniPathway" id="UPA00770">
    <property type="reaction ID" value="UER00754"/>
</dbReference>
<dbReference type="EvolutionaryTrace" id="Q7Z1V1"/>
<dbReference type="PRO" id="PR:Q7Z1V1"/>
<dbReference type="Proteomes" id="UP000002296">
    <property type="component" value="Unassembled WGS sequence"/>
</dbReference>
<dbReference type="GO" id="GO:0016020">
    <property type="term" value="C:membrane"/>
    <property type="evidence" value="ECO:0007669"/>
    <property type="project" value="UniProtKB-SubCell"/>
</dbReference>
<dbReference type="GO" id="GO:0020037">
    <property type="term" value="F:heme binding"/>
    <property type="evidence" value="ECO:0007669"/>
    <property type="project" value="InterPro"/>
</dbReference>
<dbReference type="GO" id="GO:0005506">
    <property type="term" value="F:iron ion binding"/>
    <property type="evidence" value="ECO:0007669"/>
    <property type="project" value="InterPro"/>
</dbReference>
<dbReference type="GO" id="GO:0008398">
    <property type="term" value="F:sterol 14-demethylase activity"/>
    <property type="evidence" value="ECO:0007669"/>
    <property type="project" value="UniProtKB-EC"/>
</dbReference>
<dbReference type="GO" id="GO:0016126">
    <property type="term" value="P:sterol biosynthetic process"/>
    <property type="evidence" value="ECO:0007669"/>
    <property type="project" value="UniProtKB-KW"/>
</dbReference>
<dbReference type="CDD" id="cd11042">
    <property type="entry name" value="CYP51-like"/>
    <property type="match status" value="1"/>
</dbReference>
<dbReference type="Gene3D" id="1.10.630.10">
    <property type="entry name" value="Cytochrome P450"/>
    <property type="match status" value="1"/>
</dbReference>
<dbReference type="InterPro" id="IPR050529">
    <property type="entry name" value="CYP450_sterol_14alpha_dmase"/>
</dbReference>
<dbReference type="InterPro" id="IPR001128">
    <property type="entry name" value="Cyt_P450"/>
</dbReference>
<dbReference type="InterPro" id="IPR017972">
    <property type="entry name" value="Cyt_P450_CS"/>
</dbReference>
<dbReference type="InterPro" id="IPR002403">
    <property type="entry name" value="Cyt_P450_E_grp-IV"/>
</dbReference>
<dbReference type="InterPro" id="IPR036396">
    <property type="entry name" value="Cyt_P450_sf"/>
</dbReference>
<dbReference type="PANTHER" id="PTHR24304:SF2">
    <property type="entry name" value="24-HYDROXYCHOLESTEROL 7-ALPHA-HYDROXYLASE"/>
    <property type="match status" value="1"/>
</dbReference>
<dbReference type="PANTHER" id="PTHR24304">
    <property type="entry name" value="CYTOCHROME P450 FAMILY 7"/>
    <property type="match status" value="1"/>
</dbReference>
<dbReference type="Pfam" id="PF00067">
    <property type="entry name" value="p450"/>
    <property type="match status" value="1"/>
</dbReference>
<dbReference type="PRINTS" id="PR00465">
    <property type="entry name" value="EP450IV"/>
</dbReference>
<dbReference type="PRINTS" id="PR00385">
    <property type="entry name" value="P450"/>
</dbReference>
<dbReference type="SUPFAM" id="SSF48264">
    <property type="entry name" value="Cytochrome P450"/>
    <property type="match status" value="1"/>
</dbReference>
<dbReference type="PROSITE" id="PS00086">
    <property type="entry name" value="CYTOCHROME_P450"/>
    <property type="match status" value="1"/>
</dbReference>
<name>CP51_TRYCC</name>